<keyword id="KW-0169">Cobalamin biosynthesis</keyword>
<keyword id="KW-0456">Lyase</keyword>
<keyword id="KW-0489">Methyltransferase</keyword>
<keyword id="KW-0511">Multifunctional enzyme</keyword>
<keyword id="KW-0520">NAD</keyword>
<keyword id="KW-0560">Oxidoreductase</keyword>
<keyword id="KW-0627">Porphyrin biosynthesis</keyword>
<keyword id="KW-0949">S-adenosyl-L-methionine</keyword>
<keyword id="KW-0808">Transferase</keyword>
<gene>
    <name evidence="1" type="primary">cysG</name>
    <name type="ordered locus">Tcr_1160</name>
</gene>
<dbReference type="EC" id="2.1.1.107" evidence="1"/>
<dbReference type="EC" id="1.3.1.76" evidence="1"/>
<dbReference type="EC" id="4.99.1.4" evidence="1"/>
<dbReference type="EMBL" id="CP000109">
    <property type="protein sequence ID" value="ABB41755.1"/>
    <property type="molecule type" value="Genomic_DNA"/>
</dbReference>
<dbReference type="SMR" id="Q31GG8"/>
<dbReference type="STRING" id="317025.Tcr_1160"/>
<dbReference type="KEGG" id="tcx:Tcr_1160"/>
<dbReference type="eggNOG" id="COG0007">
    <property type="taxonomic scope" value="Bacteria"/>
</dbReference>
<dbReference type="eggNOG" id="COG1648">
    <property type="taxonomic scope" value="Bacteria"/>
</dbReference>
<dbReference type="HOGENOM" id="CLU_011276_2_1_6"/>
<dbReference type="OrthoDB" id="9815856at2"/>
<dbReference type="UniPathway" id="UPA00148">
    <property type="reaction ID" value="UER00211"/>
</dbReference>
<dbReference type="UniPathway" id="UPA00148">
    <property type="reaction ID" value="UER00222"/>
</dbReference>
<dbReference type="UniPathway" id="UPA00262">
    <property type="reaction ID" value="UER00211"/>
</dbReference>
<dbReference type="UniPathway" id="UPA00262">
    <property type="reaction ID" value="UER00222"/>
</dbReference>
<dbReference type="UniPathway" id="UPA00262">
    <property type="reaction ID" value="UER00376"/>
</dbReference>
<dbReference type="GO" id="GO:0051287">
    <property type="term" value="F:NAD binding"/>
    <property type="evidence" value="ECO:0007669"/>
    <property type="project" value="InterPro"/>
</dbReference>
<dbReference type="GO" id="GO:0043115">
    <property type="term" value="F:precorrin-2 dehydrogenase activity"/>
    <property type="evidence" value="ECO:0007669"/>
    <property type="project" value="UniProtKB-UniRule"/>
</dbReference>
<dbReference type="GO" id="GO:0051266">
    <property type="term" value="F:sirohydrochlorin ferrochelatase activity"/>
    <property type="evidence" value="ECO:0007669"/>
    <property type="project" value="UniProtKB-EC"/>
</dbReference>
<dbReference type="GO" id="GO:0004851">
    <property type="term" value="F:uroporphyrin-III C-methyltransferase activity"/>
    <property type="evidence" value="ECO:0007669"/>
    <property type="project" value="UniProtKB-UniRule"/>
</dbReference>
<dbReference type="GO" id="GO:0009236">
    <property type="term" value="P:cobalamin biosynthetic process"/>
    <property type="evidence" value="ECO:0007669"/>
    <property type="project" value="UniProtKB-UniRule"/>
</dbReference>
<dbReference type="GO" id="GO:0032259">
    <property type="term" value="P:methylation"/>
    <property type="evidence" value="ECO:0007669"/>
    <property type="project" value="UniProtKB-KW"/>
</dbReference>
<dbReference type="GO" id="GO:0019354">
    <property type="term" value="P:siroheme biosynthetic process"/>
    <property type="evidence" value="ECO:0007669"/>
    <property type="project" value="UniProtKB-UniRule"/>
</dbReference>
<dbReference type="CDD" id="cd11642">
    <property type="entry name" value="SUMT"/>
    <property type="match status" value="1"/>
</dbReference>
<dbReference type="FunFam" id="3.30.950.10:FF:000001">
    <property type="entry name" value="Siroheme synthase"/>
    <property type="match status" value="1"/>
</dbReference>
<dbReference type="FunFam" id="3.40.1010.10:FF:000001">
    <property type="entry name" value="Siroheme synthase"/>
    <property type="match status" value="1"/>
</dbReference>
<dbReference type="Gene3D" id="3.40.1010.10">
    <property type="entry name" value="Cobalt-precorrin-4 Transmethylase, Domain 1"/>
    <property type="match status" value="1"/>
</dbReference>
<dbReference type="Gene3D" id="3.30.950.10">
    <property type="entry name" value="Methyltransferase, Cobalt-precorrin-4 Transmethylase, Domain 2"/>
    <property type="match status" value="1"/>
</dbReference>
<dbReference type="Gene3D" id="3.40.50.720">
    <property type="entry name" value="NAD(P)-binding Rossmann-like Domain"/>
    <property type="match status" value="1"/>
</dbReference>
<dbReference type="Gene3D" id="1.10.8.210">
    <property type="entry name" value="Sirohaem synthase, dimerisation domain"/>
    <property type="match status" value="1"/>
</dbReference>
<dbReference type="Gene3D" id="3.30.160.110">
    <property type="entry name" value="Siroheme synthase, domain 2"/>
    <property type="match status" value="1"/>
</dbReference>
<dbReference type="HAMAP" id="MF_01646">
    <property type="entry name" value="Siroheme_synth"/>
    <property type="match status" value="1"/>
</dbReference>
<dbReference type="InterPro" id="IPR000878">
    <property type="entry name" value="4pyrrol_Mease"/>
</dbReference>
<dbReference type="InterPro" id="IPR035996">
    <property type="entry name" value="4pyrrol_Methylase_sf"/>
</dbReference>
<dbReference type="InterPro" id="IPR014777">
    <property type="entry name" value="4pyrrole_Mease_sub1"/>
</dbReference>
<dbReference type="InterPro" id="IPR014776">
    <property type="entry name" value="4pyrrole_Mease_sub2"/>
</dbReference>
<dbReference type="InterPro" id="IPR006366">
    <property type="entry name" value="CobA/CysG_C"/>
</dbReference>
<dbReference type="InterPro" id="IPR036291">
    <property type="entry name" value="NAD(P)-bd_dom_sf"/>
</dbReference>
<dbReference type="InterPro" id="IPR050161">
    <property type="entry name" value="Siro_Cobalamin_biosynth"/>
</dbReference>
<dbReference type="InterPro" id="IPR037115">
    <property type="entry name" value="Sirohaem_synt_dimer_dom_sf"/>
</dbReference>
<dbReference type="InterPro" id="IPR012409">
    <property type="entry name" value="Sirohaem_synth"/>
</dbReference>
<dbReference type="InterPro" id="IPR028281">
    <property type="entry name" value="Sirohaem_synthase_central"/>
</dbReference>
<dbReference type="InterPro" id="IPR019478">
    <property type="entry name" value="Sirohaem_synthase_dimer_dom"/>
</dbReference>
<dbReference type="InterPro" id="IPR006367">
    <property type="entry name" value="Sirohaem_synthase_N"/>
</dbReference>
<dbReference type="InterPro" id="IPR003043">
    <property type="entry name" value="Uropor_MeTrfase_CS"/>
</dbReference>
<dbReference type="NCBIfam" id="TIGR01469">
    <property type="entry name" value="cobA_cysG_Cterm"/>
    <property type="match status" value="1"/>
</dbReference>
<dbReference type="NCBIfam" id="TIGR01470">
    <property type="entry name" value="cysG_Nterm"/>
    <property type="match status" value="1"/>
</dbReference>
<dbReference type="NCBIfam" id="NF004790">
    <property type="entry name" value="PRK06136.1"/>
    <property type="match status" value="1"/>
</dbReference>
<dbReference type="NCBIfam" id="NF007922">
    <property type="entry name" value="PRK10637.1"/>
    <property type="match status" value="1"/>
</dbReference>
<dbReference type="PANTHER" id="PTHR45790:SF3">
    <property type="entry name" value="S-ADENOSYL-L-METHIONINE-DEPENDENT UROPORPHYRINOGEN III METHYLTRANSFERASE, CHLOROPLASTIC"/>
    <property type="match status" value="1"/>
</dbReference>
<dbReference type="PANTHER" id="PTHR45790">
    <property type="entry name" value="SIROHEME SYNTHASE-RELATED"/>
    <property type="match status" value="1"/>
</dbReference>
<dbReference type="Pfam" id="PF10414">
    <property type="entry name" value="CysG_dimeriser"/>
    <property type="match status" value="1"/>
</dbReference>
<dbReference type="Pfam" id="PF13241">
    <property type="entry name" value="NAD_binding_7"/>
    <property type="match status" value="1"/>
</dbReference>
<dbReference type="Pfam" id="PF14824">
    <property type="entry name" value="Sirohm_synth_M"/>
    <property type="match status" value="1"/>
</dbReference>
<dbReference type="Pfam" id="PF00590">
    <property type="entry name" value="TP_methylase"/>
    <property type="match status" value="1"/>
</dbReference>
<dbReference type="PIRSF" id="PIRSF036426">
    <property type="entry name" value="Sirohaem_synth"/>
    <property type="match status" value="1"/>
</dbReference>
<dbReference type="SUPFAM" id="SSF51735">
    <property type="entry name" value="NAD(P)-binding Rossmann-fold domains"/>
    <property type="match status" value="1"/>
</dbReference>
<dbReference type="SUPFAM" id="SSF75615">
    <property type="entry name" value="Siroheme synthase middle domains-like"/>
    <property type="match status" value="1"/>
</dbReference>
<dbReference type="SUPFAM" id="SSF53790">
    <property type="entry name" value="Tetrapyrrole methylase"/>
    <property type="match status" value="1"/>
</dbReference>
<dbReference type="PROSITE" id="PS00840">
    <property type="entry name" value="SUMT_2"/>
    <property type="match status" value="1"/>
</dbReference>
<comment type="function">
    <text evidence="1">Multifunctional enzyme that catalyzes the SAM-dependent methylations of uroporphyrinogen III at position C-2 and C-7 to form precorrin-2 via precorrin-1. Then it catalyzes the NAD-dependent ring dehydrogenation of precorrin-2 to yield sirohydrochlorin. Finally, it catalyzes the ferrochelation of sirohydrochlorin to yield siroheme.</text>
</comment>
<comment type="catalytic activity">
    <reaction evidence="1">
        <text>uroporphyrinogen III + 2 S-adenosyl-L-methionine = precorrin-2 + 2 S-adenosyl-L-homocysteine + H(+)</text>
        <dbReference type="Rhea" id="RHEA:32459"/>
        <dbReference type="ChEBI" id="CHEBI:15378"/>
        <dbReference type="ChEBI" id="CHEBI:57308"/>
        <dbReference type="ChEBI" id="CHEBI:57856"/>
        <dbReference type="ChEBI" id="CHEBI:58827"/>
        <dbReference type="ChEBI" id="CHEBI:59789"/>
        <dbReference type="EC" id="2.1.1.107"/>
    </reaction>
</comment>
<comment type="catalytic activity">
    <reaction evidence="1">
        <text>precorrin-2 + NAD(+) = sirohydrochlorin + NADH + 2 H(+)</text>
        <dbReference type="Rhea" id="RHEA:15613"/>
        <dbReference type="ChEBI" id="CHEBI:15378"/>
        <dbReference type="ChEBI" id="CHEBI:57540"/>
        <dbReference type="ChEBI" id="CHEBI:57945"/>
        <dbReference type="ChEBI" id="CHEBI:58351"/>
        <dbReference type="ChEBI" id="CHEBI:58827"/>
        <dbReference type="EC" id="1.3.1.76"/>
    </reaction>
</comment>
<comment type="catalytic activity">
    <reaction evidence="1">
        <text>siroheme + 2 H(+) = sirohydrochlorin + Fe(2+)</text>
        <dbReference type="Rhea" id="RHEA:24360"/>
        <dbReference type="ChEBI" id="CHEBI:15378"/>
        <dbReference type="ChEBI" id="CHEBI:29033"/>
        <dbReference type="ChEBI" id="CHEBI:58351"/>
        <dbReference type="ChEBI" id="CHEBI:60052"/>
        <dbReference type="EC" id="4.99.1.4"/>
    </reaction>
</comment>
<comment type="pathway">
    <text evidence="1">Cofactor biosynthesis; adenosylcobalamin biosynthesis; precorrin-2 from uroporphyrinogen III: step 1/1.</text>
</comment>
<comment type="pathway">
    <text evidence="1">Cofactor biosynthesis; adenosylcobalamin biosynthesis; sirohydrochlorin from precorrin-2: step 1/1.</text>
</comment>
<comment type="pathway">
    <text evidence="1">Porphyrin-containing compound metabolism; siroheme biosynthesis; precorrin-2 from uroporphyrinogen III: step 1/1.</text>
</comment>
<comment type="pathway">
    <text evidence="1">Porphyrin-containing compound metabolism; siroheme biosynthesis; siroheme from sirohydrochlorin: step 1/1.</text>
</comment>
<comment type="pathway">
    <text evidence="1">Porphyrin-containing compound metabolism; siroheme biosynthesis; sirohydrochlorin from precorrin-2: step 1/1.</text>
</comment>
<comment type="similarity">
    <text evidence="1">In the N-terminal section; belongs to the precorrin-2 dehydrogenase / sirohydrochlorin ferrochelatase family.</text>
</comment>
<comment type="similarity">
    <text evidence="1">In the C-terminal section; belongs to the precorrin methyltransferase family.</text>
</comment>
<name>CYSG_HYDCU</name>
<feature type="chain" id="PRO_0000330566" description="Siroheme synthase">
    <location>
        <begin position="1"/>
        <end position="473"/>
    </location>
</feature>
<feature type="region of interest" description="Precorrin-2 dehydrogenase /sirohydrochlorin ferrochelatase" evidence="1">
    <location>
        <begin position="1"/>
        <end position="206"/>
    </location>
</feature>
<feature type="region of interest" description="Uroporphyrinogen-III C-methyltransferase" evidence="1">
    <location>
        <begin position="223"/>
        <end position="473"/>
    </location>
</feature>
<feature type="active site" description="Proton acceptor" evidence="1">
    <location>
        <position position="255"/>
    </location>
</feature>
<feature type="active site" description="Proton donor" evidence="1">
    <location>
        <position position="277"/>
    </location>
</feature>
<feature type="binding site" evidence="1">
    <location>
        <begin position="22"/>
        <end position="23"/>
    </location>
    <ligand>
        <name>NAD(+)</name>
        <dbReference type="ChEBI" id="CHEBI:57540"/>
    </ligand>
</feature>
<feature type="binding site" evidence="1">
    <location>
        <begin position="43"/>
        <end position="44"/>
    </location>
    <ligand>
        <name>NAD(+)</name>
        <dbReference type="ChEBI" id="CHEBI:57540"/>
    </ligand>
</feature>
<feature type="binding site" evidence="1">
    <location>
        <position position="232"/>
    </location>
    <ligand>
        <name>S-adenosyl-L-methionine</name>
        <dbReference type="ChEBI" id="CHEBI:59789"/>
    </ligand>
</feature>
<feature type="binding site" evidence="1">
    <location>
        <begin position="308"/>
        <end position="310"/>
    </location>
    <ligand>
        <name>S-adenosyl-L-methionine</name>
        <dbReference type="ChEBI" id="CHEBI:59789"/>
    </ligand>
</feature>
<feature type="binding site" evidence="1">
    <location>
        <position position="313"/>
    </location>
    <ligand>
        <name>S-adenosyl-L-methionine</name>
        <dbReference type="ChEBI" id="CHEBI:59789"/>
    </ligand>
</feature>
<feature type="binding site" evidence="1">
    <location>
        <begin position="338"/>
        <end position="339"/>
    </location>
    <ligand>
        <name>S-adenosyl-L-methionine</name>
        <dbReference type="ChEBI" id="CHEBI:59789"/>
    </ligand>
</feature>
<feature type="binding site" evidence="1">
    <location>
        <position position="390"/>
    </location>
    <ligand>
        <name>S-adenosyl-L-methionine</name>
        <dbReference type="ChEBI" id="CHEBI:59789"/>
    </ligand>
</feature>
<feature type="binding site" evidence="1">
    <location>
        <position position="419"/>
    </location>
    <ligand>
        <name>S-adenosyl-L-methionine</name>
        <dbReference type="ChEBI" id="CHEBI:59789"/>
    </ligand>
</feature>
<protein>
    <recommendedName>
        <fullName evidence="1">Siroheme synthase</fullName>
    </recommendedName>
    <domain>
        <recommendedName>
            <fullName evidence="1">Uroporphyrinogen-III C-methyltransferase</fullName>
            <shortName evidence="1">Urogen III methylase</shortName>
            <ecNumber evidence="1">2.1.1.107</ecNumber>
        </recommendedName>
        <alternativeName>
            <fullName evidence="1">SUMT</fullName>
        </alternativeName>
        <alternativeName>
            <fullName evidence="1">Uroporphyrinogen III methylase</fullName>
            <shortName evidence="1">UROM</shortName>
        </alternativeName>
    </domain>
    <domain>
        <recommendedName>
            <fullName evidence="1">Precorrin-2 dehydrogenase</fullName>
            <ecNumber evidence="1">1.3.1.76</ecNumber>
        </recommendedName>
    </domain>
    <domain>
        <recommendedName>
            <fullName evidence="1">Sirohydrochlorin ferrochelatase</fullName>
            <ecNumber evidence="1">4.99.1.4</ecNumber>
        </recommendedName>
    </domain>
</protein>
<organism>
    <name type="scientific">Hydrogenovibrio crunogenus (strain DSM 25203 / XCL-2)</name>
    <name type="common">Thiomicrospira crunogena</name>
    <dbReference type="NCBI Taxonomy" id="317025"/>
    <lineage>
        <taxon>Bacteria</taxon>
        <taxon>Pseudomonadati</taxon>
        <taxon>Pseudomonadota</taxon>
        <taxon>Gammaproteobacteria</taxon>
        <taxon>Thiotrichales</taxon>
        <taxon>Piscirickettsiaceae</taxon>
        <taxon>Hydrogenovibrio</taxon>
    </lineage>
</organism>
<sequence length="473" mass="51899">MDYLPIFMKIEQQHCLIVGGGTVAARKADLFIKSGAIVTVVAPKLGNEMTFHLAQGKIIWHMNTFSTALVSELPRPSLVISATDDQNVNLAVYKTYHAQDIPVNVADQTEYCDFILPAIVDRSPMTIAISTGGRSPVLARVMKARLETMIPHGFSVLTDLVGRYRQTVKNVISDIDGRKTFWETLLSGLFIDKAVHGNTGEAEALLEAELETIKNNGQSLPQGEVYIIGAGPGDPDLMTFKGLRLLQQADVILYDRLVAPEILEMGRREAERIYVGKKEKWHKMDQKDINQMLVDLARQGKRVARLKGGDPYIFGRGAEEVELLVQHDVPYQVVPGITAAAGCSVYADFPLTHRDYAQSVALITGHQQAGAQGIDYARLAQSGDTMVFYMGIKNAPKIQAGLIAHGLCPDTPAAIIENGTRLNQKVTVTSLAKLSETIQKKSIKPPALLVIGEVIKVRERLQKKSLLDDRVPA</sequence>
<evidence type="ECO:0000255" key="1">
    <source>
        <dbReference type="HAMAP-Rule" id="MF_01646"/>
    </source>
</evidence>
<reference key="1">
    <citation type="journal article" date="2006" name="PLoS Biol.">
        <title>The genome of deep-sea vent chemolithoautotroph Thiomicrospira crunogena XCL-2.</title>
        <authorList>
            <person name="Scott K.M."/>
            <person name="Sievert S.M."/>
            <person name="Abril F.N."/>
            <person name="Ball L.A."/>
            <person name="Barrett C.J."/>
            <person name="Blake R.A."/>
            <person name="Boller A.J."/>
            <person name="Chain P.S.G."/>
            <person name="Clark J.A."/>
            <person name="Davis C.R."/>
            <person name="Detter C."/>
            <person name="Do K.F."/>
            <person name="Dobrinski K.P."/>
            <person name="Faza B.I."/>
            <person name="Fitzpatrick K.A."/>
            <person name="Freyermuth S.K."/>
            <person name="Harmer T.L."/>
            <person name="Hauser L.J."/>
            <person name="Huegler M."/>
            <person name="Kerfeld C.A."/>
            <person name="Klotz M.G."/>
            <person name="Kong W.W."/>
            <person name="Land M."/>
            <person name="Lapidus A."/>
            <person name="Larimer F.W."/>
            <person name="Longo D.L."/>
            <person name="Lucas S."/>
            <person name="Malfatti S.A."/>
            <person name="Massey S.E."/>
            <person name="Martin D.D."/>
            <person name="McCuddin Z."/>
            <person name="Meyer F."/>
            <person name="Moore J.L."/>
            <person name="Ocampo L.H. Jr."/>
            <person name="Paul J.H."/>
            <person name="Paulsen I.T."/>
            <person name="Reep D.K."/>
            <person name="Ren Q."/>
            <person name="Ross R.L."/>
            <person name="Sato P.Y."/>
            <person name="Thomas P."/>
            <person name="Tinkham L.E."/>
            <person name="Zeruth G.T."/>
        </authorList>
    </citation>
    <scope>NUCLEOTIDE SEQUENCE [LARGE SCALE GENOMIC DNA]</scope>
    <source>
        <strain>DSM 25203 / XCL-2</strain>
    </source>
</reference>
<accession>Q31GG8</accession>
<proteinExistence type="inferred from homology"/>